<name>DCTA_BURTA</name>
<sequence>MKKPFYKVLYVQVIFAIVVGVLLGHLYPSLAVDMKPLGDGFIKLIKMVIGPIIFCTVVTGIAGMQDMKKVGRVGGKALLYFEIVSTFALVLGLAATHILRPGVGFNIDPATLNGKEVASYAAKAHGQSTVDFLMHIIPNTMIDAFAQGEILQILLIALLFGSVLAHLGERGRVVTDFIDGITRVLFGIVHIVTKLAPVGAFGAMAFTIGKYGVGSLVPLLKLIGTFYLTSVVFVLVVLGAIARFTGFSIVRFVGYIKEELLIVLGTSSSEAALPQLMEKLEKAGCSRSVVGLVVPTGYSFNLDGTNIYMTMAVLFIAQATNIELTWMQQLTLLAVAMLTSKGASGVTGAGFITLAATLAVVPTIPLSGMVLILGIDRFMSECRALTNIVGNGVATVVVSAWEKELDRAKLHAALSGNGKAAAGEAARV</sequence>
<proteinExistence type="inferred from homology"/>
<evidence type="ECO:0000255" key="1">
    <source>
        <dbReference type="HAMAP-Rule" id="MF_01300"/>
    </source>
</evidence>
<evidence type="ECO:0000305" key="2"/>
<organism>
    <name type="scientific">Burkholderia thailandensis (strain ATCC 700388 / DSM 13276 / CCUG 48851 / CIP 106301 / E264)</name>
    <dbReference type="NCBI Taxonomy" id="271848"/>
    <lineage>
        <taxon>Bacteria</taxon>
        <taxon>Pseudomonadati</taxon>
        <taxon>Pseudomonadota</taxon>
        <taxon>Betaproteobacteria</taxon>
        <taxon>Burkholderiales</taxon>
        <taxon>Burkholderiaceae</taxon>
        <taxon>Burkholderia</taxon>
        <taxon>pseudomallei group</taxon>
    </lineage>
</organism>
<keyword id="KW-0997">Cell inner membrane</keyword>
<keyword id="KW-1003">Cell membrane</keyword>
<keyword id="KW-0472">Membrane</keyword>
<keyword id="KW-0769">Symport</keyword>
<keyword id="KW-0812">Transmembrane</keyword>
<keyword id="KW-1133">Transmembrane helix</keyword>
<keyword id="KW-0813">Transport</keyword>
<gene>
    <name evidence="1" type="primary">dctA</name>
    <name type="ordered locus">BTH_I0399</name>
</gene>
<accession>Q2T1J2</accession>
<reference key="1">
    <citation type="journal article" date="2005" name="BMC Genomics">
        <title>Bacterial genome adaptation to niches: divergence of the potential virulence genes in three Burkholderia species of different survival strategies.</title>
        <authorList>
            <person name="Kim H.S."/>
            <person name="Schell M.A."/>
            <person name="Yu Y."/>
            <person name="Ulrich R.L."/>
            <person name="Sarria S.H."/>
            <person name="Nierman W.C."/>
            <person name="DeShazer D."/>
        </authorList>
    </citation>
    <scope>NUCLEOTIDE SEQUENCE [LARGE SCALE GENOMIC DNA]</scope>
    <source>
        <strain>ATCC 700388 / DSM 13276 / CCUG 48851 / CIP 106301 / E264</strain>
    </source>
</reference>
<comment type="function">
    <text evidence="1">Responsible for the transport of dicarboxylates such as succinate, fumarate, and malate from the periplasm across the membrane.</text>
</comment>
<comment type="subcellular location">
    <subcellularLocation>
        <location evidence="1">Cell inner membrane</location>
        <topology evidence="1">Multi-pass membrane protein</topology>
    </subcellularLocation>
</comment>
<comment type="similarity">
    <text evidence="1">Belongs to the dicarboxylate/amino acid:cation symporter (DAACS) (TC 2.A.23) family.</text>
</comment>
<comment type="sequence caution" evidence="2">
    <conflict type="erroneous initiation">
        <sequence resource="EMBL-CDS" id="ABC38049"/>
    </conflict>
</comment>
<dbReference type="EMBL" id="CP000086">
    <property type="protein sequence ID" value="ABC38049.1"/>
    <property type="status" value="ALT_INIT"/>
    <property type="molecule type" value="Genomic_DNA"/>
</dbReference>
<dbReference type="SMR" id="Q2T1J2"/>
<dbReference type="KEGG" id="bte:BTH_I0399"/>
<dbReference type="HOGENOM" id="CLU_019375_7_0_4"/>
<dbReference type="Proteomes" id="UP000001930">
    <property type="component" value="Chromosome I"/>
</dbReference>
<dbReference type="GO" id="GO:0005886">
    <property type="term" value="C:plasma membrane"/>
    <property type="evidence" value="ECO:0007669"/>
    <property type="project" value="UniProtKB-SubCell"/>
</dbReference>
<dbReference type="GO" id="GO:0015138">
    <property type="term" value="F:fumarate transmembrane transporter activity"/>
    <property type="evidence" value="ECO:0007669"/>
    <property type="project" value="TreeGrafter"/>
</dbReference>
<dbReference type="GO" id="GO:0015366">
    <property type="term" value="F:malate:proton symporter activity"/>
    <property type="evidence" value="ECO:0007669"/>
    <property type="project" value="TreeGrafter"/>
</dbReference>
<dbReference type="GO" id="GO:0015141">
    <property type="term" value="F:succinate transmembrane transporter activity"/>
    <property type="evidence" value="ECO:0007669"/>
    <property type="project" value="TreeGrafter"/>
</dbReference>
<dbReference type="GO" id="GO:0070778">
    <property type="term" value="P:L-aspartate transmembrane transport"/>
    <property type="evidence" value="ECO:0007669"/>
    <property type="project" value="TreeGrafter"/>
</dbReference>
<dbReference type="FunFam" id="1.10.3860.10:FF:000001">
    <property type="entry name" value="C4-dicarboxylate transport protein"/>
    <property type="match status" value="1"/>
</dbReference>
<dbReference type="Gene3D" id="1.10.3860.10">
    <property type="entry name" value="Sodium:dicarboxylate symporter"/>
    <property type="match status" value="1"/>
</dbReference>
<dbReference type="HAMAP" id="MF_01300">
    <property type="entry name" value="C4_dicarb_transport"/>
    <property type="match status" value="1"/>
</dbReference>
<dbReference type="InterPro" id="IPR023954">
    <property type="entry name" value="C4_dicarb_transport"/>
</dbReference>
<dbReference type="InterPro" id="IPR001991">
    <property type="entry name" value="Na-dicarboxylate_symporter"/>
</dbReference>
<dbReference type="InterPro" id="IPR018107">
    <property type="entry name" value="Na-dicarboxylate_symporter_CS"/>
</dbReference>
<dbReference type="InterPro" id="IPR036458">
    <property type="entry name" value="Na:dicarbo_symporter_sf"/>
</dbReference>
<dbReference type="NCBIfam" id="NF002461">
    <property type="entry name" value="PRK01663.1"/>
    <property type="match status" value="1"/>
</dbReference>
<dbReference type="NCBIfam" id="NF009587">
    <property type="entry name" value="PRK13027.1"/>
    <property type="match status" value="1"/>
</dbReference>
<dbReference type="PANTHER" id="PTHR42865:SF1">
    <property type="entry name" value="AEROBIC C4-DICARBOXYLATE TRANSPORT PROTEIN"/>
    <property type="match status" value="1"/>
</dbReference>
<dbReference type="PANTHER" id="PTHR42865">
    <property type="entry name" value="PROTON/GLUTAMATE-ASPARTATE SYMPORTER"/>
    <property type="match status" value="1"/>
</dbReference>
<dbReference type="Pfam" id="PF00375">
    <property type="entry name" value="SDF"/>
    <property type="match status" value="1"/>
</dbReference>
<dbReference type="PRINTS" id="PR00173">
    <property type="entry name" value="EDTRNSPORT"/>
</dbReference>
<dbReference type="SUPFAM" id="SSF118215">
    <property type="entry name" value="Proton glutamate symport protein"/>
    <property type="match status" value="1"/>
</dbReference>
<dbReference type="PROSITE" id="PS00713">
    <property type="entry name" value="NA_DICARBOXYL_SYMP_1"/>
    <property type="match status" value="1"/>
</dbReference>
<dbReference type="PROSITE" id="PS00714">
    <property type="entry name" value="NA_DICARBOXYL_SYMP_2"/>
    <property type="match status" value="1"/>
</dbReference>
<protein>
    <recommendedName>
        <fullName evidence="1">C4-dicarboxylate transport protein</fullName>
    </recommendedName>
</protein>
<feature type="chain" id="PRO_0000321980" description="C4-dicarboxylate transport protein">
    <location>
        <begin position="1"/>
        <end position="428"/>
    </location>
</feature>
<feature type="transmembrane region" description="Helical" evidence="1">
    <location>
        <begin position="8"/>
        <end position="28"/>
    </location>
</feature>
<feature type="transmembrane region" description="Helical" evidence="1">
    <location>
        <begin position="44"/>
        <end position="64"/>
    </location>
</feature>
<feature type="transmembrane region" description="Helical" evidence="1">
    <location>
        <begin position="78"/>
        <end position="98"/>
    </location>
</feature>
<feature type="transmembrane region" description="Helical" evidence="1">
    <location>
        <begin position="148"/>
        <end position="168"/>
    </location>
</feature>
<feature type="transmembrane region" description="Helical" evidence="1">
    <location>
        <begin position="184"/>
        <end position="204"/>
    </location>
</feature>
<feature type="transmembrane region" description="Helical" evidence="1">
    <location>
        <begin position="222"/>
        <end position="242"/>
    </location>
</feature>
<feature type="transmembrane region" description="Helical" evidence="1">
    <location>
        <begin position="307"/>
        <end position="327"/>
    </location>
</feature>
<feature type="transmembrane region" description="Helical" evidence="1">
    <location>
        <begin position="355"/>
        <end position="375"/>
    </location>
</feature>